<evidence type="ECO:0000255" key="1">
    <source>
        <dbReference type="HAMAP-Rule" id="MF_04065"/>
    </source>
</evidence>
<evidence type="ECO:0000256" key="2">
    <source>
        <dbReference type="SAM" id="MobiDB-lite"/>
    </source>
</evidence>
<protein>
    <recommendedName>
        <fullName evidence="1">RNA-directed RNA polymerase catalytic subunit</fullName>
        <ecNumber evidence="1">2.7.7.48</ecNumber>
    </recommendedName>
    <alternativeName>
        <fullName evidence="1">Polymerase basic protein 1</fullName>
        <shortName evidence="1">PB1</shortName>
    </alternativeName>
    <alternativeName>
        <fullName evidence="1">RNA-directed RNA polymerase subunit P1</fullName>
    </alternativeName>
</protein>
<dbReference type="EC" id="2.7.7.48" evidence="1"/>
<dbReference type="EMBL" id="DQ067443">
    <property type="protein sequence ID" value="AAY52743.1"/>
    <property type="molecule type" value="Genomic_RNA"/>
</dbReference>
<dbReference type="EMBL" id="CY014669">
    <property type="protein sequence ID" value="ABI84531.1"/>
    <property type="molecule type" value="Genomic_RNA"/>
</dbReference>
<dbReference type="SMR" id="Q0A451"/>
<dbReference type="Proteomes" id="UP000115522">
    <property type="component" value="Genome"/>
</dbReference>
<dbReference type="GO" id="GO:0030430">
    <property type="term" value="C:host cell cytoplasm"/>
    <property type="evidence" value="ECO:0007669"/>
    <property type="project" value="UniProtKB-SubCell"/>
</dbReference>
<dbReference type="GO" id="GO:0042025">
    <property type="term" value="C:host cell nucleus"/>
    <property type="evidence" value="ECO:0007669"/>
    <property type="project" value="UniProtKB-SubCell"/>
</dbReference>
<dbReference type="GO" id="GO:0000166">
    <property type="term" value="F:nucleotide binding"/>
    <property type="evidence" value="ECO:0007669"/>
    <property type="project" value="UniProtKB-UniRule"/>
</dbReference>
<dbReference type="GO" id="GO:0003723">
    <property type="term" value="F:RNA binding"/>
    <property type="evidence" value="ECO:0007669"/>
    <property type="project" value="InterPro"/>
</dbReference>
<dbReference type="GO" id="GO:0003968">
    <property type="term" value="F:RNA-directed RNA polymerase activity"/>
    <property type="evidence" value="ECO:0007669"/>
    <property type="project" value="UniProtKB-UniRule"/>
</dbReference>
<dbReference type="GO" id="GO:0006351">
    <property type="term" value="P:DNA-templated transcription"/>
    <property type="evidence" value="ECO:0007669"/>
    <property type="project" value="UniProtKB-UniRule"/>
</dbReference>
<dbReference type="GO" id="GO:0039657">
    <property type="term" value="P:symbiont-mediated suppression of host gene expression"/>
    <property type="evidence" value="ECO:0007669"/>
    <property type="project" value="UniProtKB-KW"/>
</dbReference>
<dbReference type="GO" id="GO:0039523">
    <property type="term" value="P:symbiont-mediated suppression of host mRNA transcription via inhibition of RNA polymerase II activity"/>
    <property type="evidence" value="ECO:0007669"/>
    <property type="project" value="UniProtKB-UniRule"/>
</dbReference>
<dbReference type="GO" id="GO:0039694">
    <property type="term" value="P:viral RNA genome replication"/>
    <property type="evidence" value="ECO:0007669"/>
    <property type="project" value="UniProtKB-UniRule"/>
</dbReference>
<dbReference type="GO" id="GO:0019083">
    <property type="term" value="P:viral transcription"/>
    <property type="evidence" value="ECO:0007669"/>
    <property type="project" value="UniProtKB-KW"/>
</dbReference>
<dbReference type="Gene3D" id="6.10.140.720">
    <property type="match status" value="1"/>
</dbReference>
<dbReference type="HAMAP" id="MF_04065">
    <property type="entry name" value="INFV_RDRP"/>
    <property type="match status" value="1"/>
</dbReference>
<dbReference type="InterPro" id="IPR007099">
    <property type="entry name" value="RNA-dir_pol_NSvirus"/>
</dbReference>
<dbReference type="InterPro" id="IPR001407">
    <property type="entry name" value="RNA_pol_PB1_influenza"/>
</dbReference>
<dbReference type="Pfam" id="PF00602">
    <property type="entry name" value="Flu_PB1"/>
    <property type="match status" value="1"/>
</dbReference>
<dbReference type="PIRSF" id="PIRSF000827">
    <property type="entry name" value="RdRPol_OMV"/>
    <property type="match status" value="1"/>
</dbReference>
<dbReference type="PROSITE" id="PS50525">
    <property type="entry name" value="RDRP_SSRNA_NEG_SEG"/>
    <property type="match status" value="1"/>
</dbReference>
<accession>Q0A451</accession>
<accession>Q3SBE8</accession>
<organismHost>
    <name type="scientific">Aves</name>
    <dbReference type="NCBI Taxonomy" id="8782"/>
</organismHost>
<organism>
    <name type="scientific">Influenza A virus (strain A/Turkey/Wisconsin/1/1966 H9N2)</name>
    <dbReference type="NCBI Taxonomy" id="385620"/>
    <lineage>
        <taxon>Viruses</taxon>
        <taxon>Riboviria</taxon>
        <taxon>Orthornavirae</taxon>
        <taxon>Negarnaviricota</taxon>
        <taxon>Polyploviricotina</taxon>
        <taxon>Insthoviricetes</taxon>
        <taxon>Articulavirales</taxon>
        <taxon>Orthomyxoviridae</taxon>
        <taxon>Alphainfluenzavirus</taxon>
        <taxon>Alphainfluenzavirus influenzae</taxon>
        <taxon>Influenza A virus</taxon>
    </lineage>
</organism>
<reference key="1">
    <citation type="journal article" date="2005" name="Virology">
        <title>Evolution of H9N2 influenza viruses from domestic poultry in Mainland China.</title>
        <authorList>
            <person name="Li C."/>
            <person name="Yu K."/>
            <person name="Tian G."/>
            <person name="Yu D."/>
            <person name="Liu L."/>
            <person name="Jing B."/>
            <person name="Ping J."/>
            <person name="Chen H."/>
        </authorList>
    </citation>
    <scope>NUCLEOTIDE SEQUENCE [GENOMIC RNA]</scope>
</reference>
<reference key="2">
    <citation type="journal article" date="2006" name="Science">
        <title>Large-scale sequence analysis of avian influenza isolates.</title>
        <authorList>
            <person name="Obenauer J.C."/>
            <person name="Denson J."/>
            <person name="Mehta P.K."/>
            <person name="Su X."/>
            <person name="Mukatira S."/>
            <person name="Finkelstein D.B."/>
            <person name="Xu X."/>
            <person name="Wang J."/>
            <person name="Ma J."/>
            <person name="Fan Y."/>
            <person name="Rakestraw K.M."/>
            <person name="Webster R.G."/>
            <person name="Hoffmann E."/>
            <person name="Krauss S."/>
            <person name="Zheng J."/>
            <person name="Zhang Z."/>
            <person name="Naeve C.W."/>
        </authorList>
    </citation>
    <scope>NUCLEOTIDE SEQUENCE [GENOMIC RNA]</scope>
</reference>
<sequence length="757" mass="86467">MDVNPTLLFLKVPAQNAISTTFPYTGDPPYSHGTGTGYTMDTVNRTHQYSEKGKWTTNTETGAPQLNPIDGPLPEDNEPSGYAQTDCVLEAMAFLEESHPGIFENSCLETMEVVQQTRVDKLTQGRQTYDWTLNRNQPAATALANTIEVFRSNGLTANESGRLIDFLKDVMESMDKEEMEITTHFQRKRRVRDNMTKKMVTQRTIGKKKQRLNKRSYLIRALTLNTMTKDAERGKLKRRAIATPGMQIRGFVYFVETLARSICEKLEQSGLPVGGNEKKAKLANVVRKMMTNSQDTELSFTITGDNTKWNENQNPRMFLAMITYITRNQPEWFRNVLSIAPIMFSNKMARLGKGYMFESKSMKLRTQIPTEMLASIDLKYFNEPTRKKIEKIRPLLIDGTASLSPGMMMGMFNMLSTVLGVSILNLGQKRYTKTTYWWDGLQSSDDFALIVNAPDHEGIQAGVDRFYRTCKLVGINMSKKKSYINRTGTFEFTSFFYRYGFVANFSMELPSFGVSGINESADMSIGVTVIKNNMINNDLGPATAQMALQLFIKDYRYTYRCHRGDTQIQTRRSFELKKLWEQTRSKAGLLVSDGGPNLYNIRNLHIPEVCLKWELMDEDYQGRLCNPLNPFVSHKEIESVNNAVVMPAHGPAKSMEYDAVATTHSWIPKRNRSILNTSQRGILEDEQMYQKCCNLFEKFFPSSSYRRPVGISSMVEAMVSRARIDARIDFESGRIKKEEFAEIMKICSTIEELRRQK</sequence>
<comment type="function">
    <text evidence="1">RNA-dependent RNA polymerase which is responsible for replication and transcription of virus RNA segments. The transcription of viral mRNAs occurs by a unique mechanism called cap-snatching. 5' methylated caps of cellular mRNAs are cleaved after 10-13 nucleotides by PA. In turn, these short capped RNAs are used as primers by PB1 for transcription of viral mRNAs. During virus replication, PB1 initiates RNA synthesis and copy vRNA into complementary RNA (cRNA) which in turn serves as a template for the production of more vRNAs.</text>
</comment>
<comment type="catalytic activity">
    <reaction evidence="1">
        <text>RNA(n) + a ribonucleoside 5'-triphosphate = RNA(n+1) + diphosphate</text>
        <dbReference type="Rhea" id="RHEA:21248"/>
        <dbReference type="Rhea" id="RHEA-COMP:14527"/>
        <dbReference type="Rhea" id="RHEA-COMP:17342"/>
        <dbReference type="ChEBI" id="CHEBI:33019"/>
        <dbReference type="ChEBI" id="CHEBI:61557"/>
        <dbReference type="ChEBI" id="CHEBI:140395"/>
        <dbReference type="EC" id="2.7.7.48"/>
    </reaction>
</comment>
<comment type="subunit">
    <text evidence="1">Influenza RNA polymerase is composed of three subunits: PB1, PB2 and PA. Interacts (via N-terminus) with PA (via C-terminus). Interacts (via C-terminus) with PB2 (via N-terminus); this interaction is essential for transcription initiation.</text>
</comment>
<comment type="subcellular location">
    <subcellularLocation>
        <location evidence="1">Host nucleus</location>
    </subcellularLocation>
    <subcellularLocation>
        <location evidence="1">Host cytoplasm</location>
    </subcellularLocation>
</comment>
<comment type="PTM">
    <text evidence="1">Phosphorylated by host PRKCA.</text>
</comment>
<comment type="similarity">
    <text evidence="1">Belongs to the influenza viruses polymerase PB1 family.</text>
</comment>
<feature type="chain" id="PRO_0000279615" description="RNA-directed RNA polymerase catalytic subunit">
    <location>
        <begin position="1"/>
        <end position="757"/>
    </location>
</feature>
<feature type="domain" description="RdRp catalytic" evidence="1">
    <location>
        <begin position="286"/>
        <end position="483"/>
    </location>
</feature>
<feature type="region of interest" description="Disordered" evidence="2">
    <location>
        <begin position="50"/>
        <end position="82"/>
    </location>
</feature>
<feature type="region of interest" description="Promoter-binding site" evidence="1">
    <location>
        <begin position="249"/>
        <end position="256"/>
    </location>
</feature>
<feature type="short sequence motif" description="Nuclear localization signal" evidence="1">
    <location>
        <begin position="187"/>
        <end position="195"/>
    </location>
</feature>
<feature type="short sequence motif" description="Nuclear localization signal" evidence="1">
    <location>
        <begin position="203"/>
        <end position="216"/>
    </location>
</feature>
<feature type="compositionally biased region" description="Polar residues" evidence="2">
    <location>
        <begin position="55"/>
        <end position="64"/>
    </location>
</feature>
<feature type="sequence conflict" description="In Ref. 1; AAY52743." ref="1">
    <original>E</original>
    <variation>G</variation>
    <location>
        <position position="97"/>
    </location>
</feature>
<feature type="sequence conflict" description="In Ref. 1; AAY52743." ref="1">
    <original>M</original>
    <variation>V</variation>
    <location>
        <position position="111"/>
    </location>
</feature>
<feature type="sequence conflict" description="In Ref. 1; AAY52743." ref="1">
    <original>KK</original>
    <variation>QR</variation>
    <location>
        <begin position="197"/>
        <end position="198"/>
    </location>
</feature>
<feature type="sequence conflict" description="In Ref. 1; AAY52743." ref="1">
    <original>IGK</original>
    <variation>RGE</variation>
    <location>
        <begin position="205"/>
        <end position="207"/>
    </location>
</feature>
<feature type="sequence conflict" description="In Ref. 1; AAY52743." ref="1">
    <original>NM</original>
    <variation>HV</variation>
    <location>
        <begin position="533"/>
        <end position="534"/>
    </location>
</feature>
<feature type="sequence conflict" description="In Ref. 1; AAY52743." ref="1">
    <original>Q</original>
    <variation>P</variation>
    <location>
        <position position="549"/>
    </location>
</feature>
<feature type="sequence conflict" description="In Ref. 1; AAY52743." ref="1">
    <original>KDY</original>
    <variation>GDN</variation>
    <location>
        <begin position="553"/>
        <end position="555"/>
    </location>
</feature>
<feature type="sequence conflict" description="In Ref. 1; AAY52743." ref="1">
    <original>C</original>
    <variation>G</variation>
    <location>
        <position position="561"/>
    </location>
</feature>
<feature type="sequence conflict" description="In Ref. 1; AAY52743." ref="1">
    <original>K</original>
    <variation>R</variation>
    <location>
        <position position="577"/>
    </location>
</feature>
<proteinExistence type="inferred from homology"/>
<name>RDRP_I66A1</name>
<keyword id="KW-1262">Eukaryotic host gene expression shutoff by virus</keyword>
<keyword id="KW-1191">Eukaryotic host transcription shutoff by virus</keyword>
<keyword id="KW-1035">Host cytoplasm</keyword>
<keyword id="KW-1190">Host gene expression shutoff by virus</keyword>
<keyword id="KW-1048">Host nucleus</keyword>
<keyword id="KW-0945">Host-virus interaction</keyword>
<keyword id="KW-1104">Inhibition of host RNA polymerase II by virus</keyword>
<keyword id="KW-0547">Nucleotide-binding</keyword>
<keyword id="KW-0548">Nucleotidyltransferase</keyword>
<keyword id="KW-0597">Phosphoprotein</keyword>
<keyword id="KW-0696">RNA-directed RNA polymerase</keyword>
<keyword id="KW-0808">Transferase</keyword>
<keyword id="KW-0693">Viral RNA replication</keyword>
<keyword id="KW-1195">Viral transcription</keyword>
<gene>
    <name evidence="1" type="primary">PB1</name>
</gene>